<reference key="1">
    <citation type="journal article" date="2007" name="PLoS Genet.">
        <title>Meningococcal genetic variation mechanisms viewed through comparative analysis of serogroup C strain FAM18.</title>
        <authorList>
            <person name="Bentley S.D."/>
            <person name="Vernikos G.S."/>
            <person name="Snyder L.A.S."/>
            <person name="Churcher C."/>
            <person name="Arrowsmith C."/>
            <person name="Chillingworth T."/>
            <person name="Cronin A."/>
            <person name="Davis P.H."/>
            <person name="Holroyd N.E."/>
            <person name="Jagels K."/>
            <person name="Maddison M."/>
            <person name="Moule S."/>
            <person name="Rabbinowitsch E."/>
            <person name="Sharp S."/>
            <person name="Unwin L."/>
            <person name="Whitehead S."/>
            <person name="Quail M.A."/>
            <person name="Achtman M."/>
            <person name="Barrell B.G."/>
            <person name="Saunders N.J."/>
            <person name="Parkhill J."/>
        </authorList>
    </citation>
    <scope>NUCLEOTIDE SEQUENCE [LARGE SCALE GENOMIC DNA]</scope>
    <source>
        <strain>ATCC 700532 / DSM 15464 / FAM18</strain>
    </source>
</reference>
<comment type="function">
    <text evidence="1">Catalyzes the transfer of the enolpyruvyl moiety of phosphoenolpyruvate (PEP) to the 5-hydroxyl of shikimate-3-phosphate (S3P) to produce enolpyruvyl shikimate-3-phosphate and inorganic phosphate.</text>
</comment>
<comment type="catalytic activity">
    <reaction evidence="1">
        <text>3-phosphoshikimate + phosphoenolpyruvate = 5-O-(1-carboxyvinyl)-3-phosphoshikimate + phosphate</text>
        <dbReference type="Rhea" id="RHEA:21256"/>
        <dbReference type="ChEBI" id="CHEBI:43474"/>
        <dbReference type="ChEBI" id="CHEBI:57701"/>
        <dbReference type="ChEBI" id="CHEBI:58702"/>
        <dbReference type="ChEBI" id="CHEBI:145989"/>
        <dbReference type="EC" id="2.5.1.19"/>
    </reaction>
    <physiologicalReaction direction="left-to-right" evidence="1">
        <dbReference type="Rhea" id="RHEA:21257"/>
    </physiologicalReaction>
</comment>
<comment type="pathway">
    <text evidence="1">Metabolic intermediate biosynthesis; chorismate biosynthesis; chorismate from D-erythrose 4-phosphate and phosphoenolpyruvate: step 6/7.</text>
</comment>
<comment type="subunit">
    <text evidence="1">Monomer.</text>
</comment>
<comment type="subcellular location">
    <subcellularLocation>
        <location evidence="1">Cytoplasm</location>
    </subcellularLocation>
</comment>
<comment type="similarity">
    <text evidence="1">Belongs to the EPSP synthase family.</text>
</comment>
<keyword id="KW-0028">Amino-acid biosynthesis</keyword>
<keyword id="KW-0057">Aromatic amino acid biosynthesis</keyword>
<keyword id="KW-0963">Cytoplasm</keyword>
<keyword id="KW-0808">Transferase</keyword>
<gene>
    <name evidence="1" type="primary">aroA</name>
    <name type="ordered locus">NMC1366</name>
</gene>
<protein>
    <recommendedName>
        <fullName evidence="1">3-phosphoshikimate 1-carboxyvinyltransferase</fullName>
        <ecNumber evidence="1">2.5.1.19</ecNumber>
    </recommendedName>
    <alternativeName>
        <fullName evidence="1">5-enolpyruvylshikimate-3-phosphate synthase</fullName>
        <shortName evidence="1">EPSP synthase</shortName>
        <shortName evidence="1">EPSPS</shortName>
    </alternativeName>
</protein>
<organism>
    <name type="scientific">Neisseria meningitidis serogroup C / serotype 2a (strain ATCC 700532 / DSM 15464 / FAM18)</name>
    <dbReference type="NCBI Taxonomy" id="272831"/>
    <lineage>
        <taxon>Bacteria</taxon>
        <taxon>Pseudomonadati</taxon>
        <taxon>Pseudomonadota</taxon>
        <taxon>Betaproteobacteria</taxon>
        <taxon>Neisseriales</taxon>
        <taxon>Neisseriaceae</taxon>
        <taxon>Neisseria</taxon>
    </lineage>
</organism>
<dbReference type="EC" id="2.5.1.19" evidence="1"/>
<dbReference type="EMBL" id="AM421808">
    <property type="protein sequence ID" value="CAM10584.1"/>
    <property type="molecule type" value="Genomic_DNA"/>
</dbReference>
<dbReference type="RefSeq" id="WP_002220777.1">
    <property type="nucleotide sequence ID" value="NC_008767.1"/>
</dbReference>
<dbReference type="SMR" id="A1KUN6"/>
<dbReference type="KEGG" id="nmc:NMC1366"/>
<dbReference type="HOGENOM" id="CLU_024321_0_0_4"/>
<dbReference type="UniPathway" id="UPA00053">
    <property type="reaction ID" value="UER00089"/>
</dbReference>
<dbReference type="Proteomes" id="UP000002286">
    <property type="component" value="Chromosome"/>
</dbReference>
<dbReference type="GO" id="GO:0005737">
    <property type="term" value="C:cytoplasm"/>
    <property type="evidence" value="ECO:0007669"/>
    <property type="project" value="UniProtKB-SubCell"/>
</dbReference>
<dbReference type="GO" id="GO:0003866">
    <property type="term" value="F:3-phosphoshikimate 1-carboxyvinyltransferase activity"/>
    <property type="evidence" value="ECO:0007669"/>
    <property type="project" value="UniProtKB-UniRule"/>
</dbReference>
<dbReference type="GO" id="GO:0008652">
    <property type="term" value="P:amino acid biosynthetic process"/>
    <property type="evidence" value="ECO:0007669"/>
    <property type="project" value="UniProtKB-KW"/>
</dbReference>
<dbReference type="GO" id="GO:0009073">
    <property type="term" value="P:aromatic amino acid family biosynthetic process"/>
    <property type="evidence" value="ECO:0007669"/>
    <property type="project" value="UniProtKB-KW"/>
</dbReference>
<dbReference type="GO" id="GO:0009423">
    <property type="term" value="P:chorismate biosynthetic process"/>
    <property type="evidence" value="ECO:0007669"/>
    <property type="project" value="UniProtKB-UniRule"/>
</dbReference>
<dbReference type="CDD" id="cd01556">
    <property type="entry name" value="EPSP_synthase"/>
    <property type="match status" value="1"/>
</dbReference>
<dbReference type="FunFam" id="3.65.10.10:FF:000003">
    <property type="entry name" value="3-phosphoshikimate 1-carboxyvinyltransferase"/>
    <property type="match status" value="1"/>
</dbReference>
<dbReference type="FunFam" id="3.65.10.10:FF:000005">
    <property type="entry name" value="3-phosphoshikimate 1-carboxyvinyltransferase"/>
    <property type="match status" value="1"/>
</dbReference>
<dbReference type="Gene3D" id="3.65.10.10">
    <property type="entry name" value="Enolpyruvate transferase domain"/>
    <property type="match status" value="2"/>
</dbReference>
<dbReference type="HAMAP" id="MF_00210">
    <property type="entry name" value="EPSP_synth"/>
    <property type="match status" value="1"/>
</dbReference>
<dbReference type="InterPro" id="IPR001986">
    <property type="entry name" value="Enolpyruvate_Tfrase_dom"/>
</dbReference>
<dbReference type="InterPro" id="IPR036968">
    <property type="entry name" value="Enolpyruvate_Tfrase_sf"/>
</dbReference>
<dbReference type="InterPro" id="IPR006264">
    <property type="entry name" value="EPSP_synthase"/>
</dbReference>
<dbReference type="InterPro" id="IPR023193">
    <property type="entry name" value="EPSP_synthase_CS"/>
</dbReference>
<dbReference type="InterPro" id="IPR013792">
    <property type="entry name" value="RNA3'P_cycl/enolpyr_Trfase_a/b"/>
</dbReference>
<dbReference type="NCBIfam" id="TIGR01356">
    <property type="entry name" value="aroA"/>
    <property type="match status" value="1"/>
</dbReference>
<dbReference type="PANTHER" id="PTHR21090">
    <property type="entry name" value="AROM/DEHYDROQUINATE SYNTHASE"/>
    <property type="match status" value="1"/>
</dbReference>
<dbReference type="PANTHER" id="PTHR21090:SF5">
    <property type="entry name" value="PENTAFUNCTIONAL AROM POLYPEPTIDE"/>
    <property type="match status" value="1"/>
</dbReference>
<dbReference type="Pfam" id="PF00275">
    <property type="entry name" value="EPSP_synthase"/>
    <property type="match status" value="1"/>
</dbReference>
<dbReference type="PIRSF" id="PIRSF000505">
    <property type="entry name" value="EPSPS"/>
    <property type="match status" value="1"/>
</dbReference>
<dbReference type="SUPFAM" id="SSF55205">
    <property type="entry name" value="EPT/RTPC-like"/>
    <property type="match status" value="1"/>
</dbReference>
<dbReference type="PROSITE" id="PS00104">
    <property type="entry name" value="EPSP_SYNTHASE_1"/>
    <property type="match status" value="1"/>
</dbReference>
<dbReference type="PROSITE" id="PS00885">
    <property type="entry name" value="EPSP_SYNTHASE_2"/>
    <property type="match status" value="1"/>
</dbReference>
<accession>A1KUN6</accession>
<sequence length="433" mass="47075">MTESVRLPVARLKPSTVALPGSKSISNRTLLLAALSDNACEIHSLLKSDDTDRMLEALDKLGVQIEYLAEDRLKVHGTGGRFPNRTADLFLGNAGTAFRPLTAALAVLGGDYHLHGVPRMHERPIGDLADALRIAGADVEYLGKEHYPPLHIGKRQDNGERVIPIKGNVSSQFLTALLMALPLTGQAFEIRMVGELISKPYIDITLKLMAQFGVQVANENYRVFKIPADAHYHAPEHLHVEGDASSASYFLAAGLIAATPVRVTGIGANSIQGDVAFARELEKIGADVVWGENFVEVSRPKERAVQSFDLDANHIPDAAMTLAIVALATGQTCTLRNIGSWRVKETDRIAAMANELRKLGAKVVEEAEAIHITPPKTLTPDAVIDTYDDHRMAMCFSLVSLLGVPVVINDPKCTHKTFPTYFDVFSSLTETTE</sequence>
<proteinExistence type="inferred from homology"/>
<feature type="chain" id="PRO_1000099732" description="3-phosphoshikimate 1-carboxyvinyltransferase">
    <location>
        <begin position="1"/>
        <end position="433"/>
    </location>
</feature>
<feature type="active site" description="Proton acceptor" evidence="1">
    <location>
        <position position="317"/>
    </location>
</feature>
<feature type="binding site" evidence="1">
    <location>
        <position position="23"/>
    </location>
    <ligand>
        <name>3-phosphoshikimate</name>
        <dbReference type="ChEBI" id="CHEBI:145989"/>
    </ligand>
</feature>
<feature type="binding site" evidence="1">
    <location>
        <position position="23"/>
    </location>
    <ligand>
        <name>phosphoenolpyruvate</name>
        <dbReference type="ChEBI" id="CHEBI:58702"/>
    </ligand>
</feature>
<feature type="binding site" evidence="1">
    <location>
        <position position="24"/>
    </location>
    <ligand>
        <name>3-phosphoshikimate</name>
        <dbReference type="ChEBI" id="CHEBI:145989"/>
    </ligand>
</feature>
<feature type="binding site" evidence="1">
    <location>
        <position position="28"/>
    </location>
    <ligand>
        <name>3-phosphoshikimate</name>
        <dbReference type="ChEBI" id="CHEBI:145989"/>
    </ligand>
</feature>
<feature type="binding site" evidence="1">
    <location>
        <position position="95"/>
    </location>
    <ligand>
        <name>phosphoenolpyruvate</name>
        <dbReference type="ChEBI" id="CHEBI:58702"/>
    </ligand>
</feature>
<feature type="binding site" evidence="1">
    <location>
        <position position="123"/>
    </location>
    <ligand>
        <name>phosphoenolpyruvate</name>
        <dbReference type="ChEBI" id="CHEBI:58702"/>
    </ligand>
</feature>
<feature type="binding site" evidence="1">
    <location>
        <position position="170"/>
    </location>
    <ligand>
        <name>3-phosphoshikimate</name>
        <dbReference type="ChEBI" id="CHEBI:145989"/>
    </ligand>
</feature>
<feature type="binding site" evidence="1">
    <location>
        <position position="171"/>
    </location>
    <ligand>
        <name>3-phosphoshikimate</name>
        <dbReference type="ChEBI" id="CHEBI:145989"/>
    </ligand>
</feature>
<feature type="binding site" evidence="1">
    <location>
        <position position="172"/>
    </location>
    <ligand>
        <name>3-phosphoshikimate</name>
        <dbReference type="ChEBI" id="CHEBI:145989"/>
    </ligand>
</feature>
<feature type="binding site" evidence="1">
    <location>
        <position position="172"/>
    </location>
    <ligand>
        <name>phosphoenolpyruvate</name>
        <dbReference type="ChEBI" id="CHEBI:58702"/>
    </ligand>
</feature>
<feature type="binding site" evidence="1">
    <location>
        <position position="198"/>
    </location>
    <ligand>
        <name>3-phosphoshikimate</name>
        <dbReference type="ChEBI" id="CHEBI:145989"/>
    </ligand>
</feature>
<feature type="binding site" evidence="1">
    <location>
        <position position="317"/>
    </location>
    <ligand>
        <name>3-phosphoshikimate</name>
        <dbReference type="ChEBI" id="CHEBI:145989"/>
    </ligand>
</feature>
<feature type="binding site" evidence="1">
    <location>
        <position position="344"/>
    </location>
    <ligand>
        <name>3-phosphoshikimate</name>
        <dbReference type="ChEBI" id="CHEBI:145989"/>
    </ligand>
</feature>
<feature type="binding site" evidence="1">
    <location>
        <position position="348"/>
    </location>
    <ligand>
        <name>phosphoenolpyruvate</name>
        <dbReference type="ChEBI" id="CHEBI:58702"/>
    </ligand>
</feature>
<feature type="binding site" evidence="1">
    <location>
        <position position="391"/>
    </location>
    <ligand>
        <name>phosphoenolpyruvate</name>
        <dbReference type="ChEBI" id="CHEBI:58702"/>
    </ligand>
</feature>
<feature type="binding site" evidence="1">
    <location>
        <position position="416"/>
    </location>
    <ligand>
        <name>phosphoenolpyruvate</name>
        <dbReference type="ChEBI" id="CHEBI:58702"/>
    </ligand>
</feature>
<name>AROA_NEIMF</name>
<evidence type="ECO:0000255" key="1">
    <source>
        <dbReference type="HAMAP-Rule" id="MF_00210"/>
    </source>
</evidence>